<evidence type="ECO:0000255" key="1">
    <source>
        <dbReference type="HAMAP-Rule" id="MF_00219"/>
    </source>
</evidence>
<reference key="1">
    <citation type="journal article" date="2006" name="Genome Biol.">
        <title>The genome of Rhizobium leguminosarum has recognizable core and accessory components.</title>
        <authorList>
            <person name="Young J.P.W."/>
            <person name="Crossman L.C."/>
            <person name="Johnston A.W.B."/>
            <person name="Thomson N.R."/>
            <person name="Ghazoui Z.F."/>
            <person name="Hull K.H."/>
            <person name="Wexler M."/>
            <person name="Curson A.R.J."/>
            <person name="Todd J.D."/>
            <person name="Poole P.S."/>
            <person name="Mauchline T.H."/>
            <person name="East A.K."/>
            <person name="Quail M.A."/>
            <person name="Churcher C."/>
            <person name="Arrowsmith C."/>
            <person name="Cherevach I."/>
            <person name="Chillingworth T."/>
            <person name="Clarke K."/>
            <person name="Cronin A."/>
            <person name="Davis P."/>
            <person name="Fraser A."/>
            <person name="Hance Z."/>
            <person name="Hauser H."/>
            <person name="Jagels K."/>
            <person name="Moule S."/>
            <person name="Mungall K."/>
            <person name="Norbertczak H."/>
            <person name="Rabbinowitsch E."/>
            <person name="Sanders M."/>
            <person name="Simmonds M."/>
            <person name="Whitehead S."/>
            <person name="Parkhill J."/>
        </authorList>
    </citation>
    <scope>NUCLEOTIDE SEQUENCE [LARGE SCALE GENOMIC DNA]</scope>
    <source>
        <strain>DSM 114642 / LMG 32736 / 3841</strain>
    </source>
</reference>
<feature type="chain" id="PRO_1000024045" description="Dihydroorotase">
    <location>
        <begin position="1"/>
        <end position="348"/>
    </location>
</feature>
<feature type="active site" evidence="1">
    <location>
        <position position="247"/>
    </location>
</feature>
<feature type="binding site" evidence="1">
    <location>
        <position position="13"/>
    </location>
    <ligand>
        <name>Zn(2+)</name>
        <dbReference type="ChEBI" id="CHEBI:29105"/>
        <label>1</label>
    </ligand>
</feature>
<feature type="binding site" evidence="1">
    <location>
        <begin position="15"/>
        <end position="17"/>
    </location>
    <ligand>
        <name>substrate</name>
    </ligand>
</feature>
<feature type="binding site" evidence="1">
    <location>
        <position position="15"/>
    </location>
    <ligand>
        <name>Zn(2+)</name>
        <dbReference type="ChEBI" id="CHEBI:29105"/>
        <label>1</label>
    </ligand>
</feature>
<feature type="binding site" evidence="1">
    <location>
        <position position="41"/>
    </location>
    <ligand>
        <name>substrate</name>
    </ligand>
</feature>
<feature type="binding site" description="via carbamate group" evidence="1">
    <location>
        <position position="99"/>
    </location>
    <ligand>
        <name>Zn(2+)</name>
        <dbReference type="ChEBI" id="CHEBI:29105"/>
        <label>1</label>
    </ligand>
</feature>
<feature type="binding site" description="via carbamate group" evidence="1">
    <location>
        <position position="99"/>
    </location>
    <ligand>
        <name>Zn(2+)</name>
        <dbReference type="ChEBI" id="CHEBI:29105"/>
        <label>2</label>
    </ligand>
</feature>
<feature type="binding site" evidence="1">
    <location>
        <position position="136"/>
    </location>
    <ligand>
        <name>substrate</name>
    </ligand>
</feature>
<feature type="binding site" evidence="1">
    <location>
        <position position="136"/>
    </location>
    <ligand>
        <name>Zn(2+)</name>
        <dbReference type="ChEBI" id="CHEBI:29105"/>
        <label>2</label>
    </ligand>
</feature>
<feature type="binding site" evidence="1">
    <location>
        <position position="174"/>
    </location>
    <ligand>
        <name>Zn(2+)</name>
        <dbReference type="ChEBI" id="CHEBI:29105"/>
        <label>2</label>
    </ligand>
</feature>
<feature type="binding site" evidence="1">
    <location>
        <position position="219"/>
    </location>
    <ligand>
        <name>substrate</name>
    </ligand>
</feature>
<feature type="binding site" evidence="1">
    <location>
        <position position="247"/>
    </location>
    <ligand>
        <name>Zn(2+)</name>
        <dbReference type="ChEBI" id="CHEBI:29105"/>
        <label>1</label>
    </ligand>
</feature>
<feature type="binding site" evidence="1">
    <location>
        <position position="251"/>
    </location>
    <ligand>
        <name>substrate</name>
    </ligand>
</feature>
<feature type="binding site" evidence="1">
    <location>
        <position position="263"/>
    </location>
    <ligand>
        <name>substrate</name>
    </ligand>
</feature>
<feature type="modified residue" description="N6-carboxylysine" evidence="1">
    <location>
        <position position="99"/>
    </location>
</feature>
<dbReference type="EC" id="3.5.2.3" evidence="1"/>
<dbReference type="EMBL" id="AM236080">
    <property type="protein sequence ID" value="CAK05986.1"/>
    <property type="molecule type" value="Genomic_DNA"/>
</dbReference>
<dbReference type="RefSeq" id="WP_011650283.1">
    <property type="nucleotide sequence ID" value="NC_008380.1"/>
</dbReference>
<dbReference type="SMR" id="Q1MM16"/>
<dbReference type="MEROPS" id="M38.A02"/>
<dbReference type="EnsemblBacteria" id="CAK05986">
    <property type="protein sequence ID" value="CAK05986"/>
    <property type="gene ID" value="RL0493"/>
</dbReference>
<dbReference type="KEGG" id="rle:RL0493"/>
<dbReference type="eggNOG" id="COG0418">
    <property type="taxonomic scope" value="Bacteria"/>
</dbReference>
<dbReference type="HOGENOM" id="CLU_041558_1_0_5"/>
<dbReference type="UniPathway" id="UPA00070">
    <property type="reaction ID" value="UER00117"/>
</dbReference>
<dbReference type="Proteomes" id="UP000006575">
    <property type="component" value="Chromosome"/>
</dbReference>
<dbReference type="GO" id="GO:0005829">
    <property type="term" value="C:cytosol"/>
    <property type="evidence" value="ECO:0007669"/>
    <property type="project" value="TreeGrafter"/>
</dbReference>
<dbReference type="GO" id="GO:0004151">
    <property type="term" value="F:dihydroorotase activity"/>
    <property type="evidence" value="ECO:0007669"/>
    <property type="project" value="UniProtKB-UniRule"/>
</dbReference>
<dbReference type="GO" id="GO:0008270">
    <property type="term" value="F:zinc ion binding"/>
    <property type="evidence" value="ECO:0007669"/>
    <property type="project" value="UniProtKB-UniRule"/>
</dbReference>
<dbReference type="GO" id="GO:0006207">
    <property type="term" value="P:'de novo' pyrimidine nucleobase biosynthetic process"/>
    <property type="evidence" value="ECO:0007669"/>
    <property type="project" value="TreeGrafter"/>
</dbReference>
<dbReference type="GO" id="GO:0044205">
    <property type="term" value="P:'de novo' UMP biosynthetic process"/>
    <property type="evidence" value="ECO:0007669"/>
    <property type="project" value="UniProtKB-UniRule"/>
</dbReference>
<dbReference type="CDD" id="cd01294">
    <property type="entry name" value="DHOase"/>
    <property type="match status" value="1"/>
</dbReference>
<dbReference type="Gene3D" id="3.20.20.140">
    <property type="entry name" value="Metal-dependent hydrolases"/>
    <property type="match status" value="1"/>
</dbReference>
<dbReference type="HAMAP" id="MF_00219">
    <property type="entry name" value="PyrC_classII"/>
    <property type="match status" value="1"/>
</dbReference>
<dbReference type="InterPro" id="IPR006680">
    <property type="entry name" value="Amidohydro-rel"/>
</dbReference>
<dbReference type="InterPro" id="IPR004721">
    <property type="entry name" value="DHOdimr"/>
</dbReference>
<dbReference type="InterPro" id="IPR002195">
    <property type="entry name" value="Dihydroorotase_CS"/>
</dbReference>
<dbReference type="InterPro" id="IPR032466">
    <property type="entry name" value="Metal_Hydrolase"/>
</dbReference>
<dbReference type="NCBIfam" id="TIGR00856">
    <property type="entry name" value="pyrC_dimer"/>
    <property type="match status" value="1"/>
</dbReference>
<dbReference type="PANTHER" id="PTHR43137">
    <property type="entry name" value="DIHYDROOROTASE"/>
    <property type="match status" value="1"/>
</dbReference>
<dbReference type="PANTHER" id="PTHR43137:SF1">
    <property type="entry name" value="DIHYDROOROTASE"/>
    <property type="match status" value="1"/>
</dbReference>
<dbReference type="Pfam" id="PF01979">
    <property type="entry name" value="Amidohydro_1"/>
    <property type="match status" value="1"/>
</dbReference>
<dbReference type="PIRSF" id="PIRSF001237">
    <property type="entry name" value="DHOdimr"/>
    <property type="match status" value="1"/>
</dbReference>
<dbReference type="SUPFAM" id="SSF51556">
    <property type="entry name" value="Metallo-dependent hydrolases"/>
    <property type="match status" value="1"/>
</dbReference>
<dbReference type="PROSITE" id="PS00482">
    <property type="entry name" value="DIHYDROOROTASE_1"/>
    <property type="match status" value="1"/>
</dbReference>
<dbReference type="PROSITE" id="PS00483">
    <property type="entry name" value="DIHYDROOROTASE_2"/>
    <property type="match status" value="1"/>
</dbReference>
<keyword id="KW-0378">Hydrolase</keyword>
<keyword id="KW-0479">Metal-binding</keyword>
<keyword id="KW-0665">Pyrimidine biosynthesis</keyword>
<keyword id="KW-0862">Zinc</keyword>
<gene>
    <name evidence="1" type="primary">pyrC</name>
    <name type="ordered locus">RL0493</name>
</gene>
<comment type="function">
    <text evidence="1">Catalyzes the reversible cyclization of carbamoyl aspartate to dihydroorotate.</text>
</comment>
<comment type="catalytic activity">
    <reaction evidence="1">
        <text>(S)-dihydroorotate + H2O = N-carbamoyl-L-aspartate + H(+)</text>
        <dbReference type="Rhea" id="RHEA:24296"/>
        <dbReference type="ChEBI" id="CHEBI:15377"/>
        <dbReference type="ChEBI" id="CHEBI:15378"/>
        <dbReference type="ChEBI" id="CHEBI:30864"/>
        <dbReference type="ChEBI" id="CHEBI:32814"/>
        <dbReference type="EC" id="3.5.2.3"/>
    </reaction>
</comment>
<comment type="cofactor">
    <cofactor evidence="1">
        <name>Zn(2+)</name>
        <dbReference type="ChEBI" id="CHEBI:29105"/>
    </cofactor>
    <text evidence="1">Binds 2 Zn(2+) ions per subunit.</text>
</comment>
<comment type="pathway">
    <text evidence="1">Pyrimidine metabolism; UMP biosynthesis via de novo pathway; (S)-dihydroorotate from bicarbonate: step 3/3.</text>
</comment>
<comment type="subunit">
    <text evidence="1">Homodimer.</text>
</comment>
<comment type="similarity">
    <text evidence="1">Belongs to the metallo-dependent hydrolases superfamily. DHOase family. Class II DHOase subfamily.</text>
</comment>
<name>PYRC_RHIJ3</name>
<protein>
    <recommendedName>
        <fullName evidence="1">Dihydroorotase</fullName>
        <shortName evidence="1">DHOase</shortName>
        <ecNumber evidence="1">3.5.2.3</ecNumber>
    </recommendedName>
</protein>
<organism>
    <name type="scientific">Rhizobium johnstonii (strain DSM 114642 / LMG 32736 / 3841)</name>
    <name type="common">Rhizobium leguminosarum bv. viciae</name>
    <dbReference type="NCBI Taxonomy" id="216596"/>
    <lineage>
        <taxon>Bacteria</taxon>
        <taxon>Pseudomonadati</taxon>
        <taxon>Pseudomonadota</taxon>
        <taxon>Alphaproteobacteria</taxon>
        <taxon>Hyphomicrobiales</taxon>
        <taxon>Rhizobiaceae</taxon>
        <taxon>Rhizobium/Agrobacterium group</taxon>
        <taxon>Rhizobium</taxon>
        <taxon>Rhizobium johnstonii</taxon>
    </lineage>
</organism>
<accession>Q1MM16</accession>
<proteinExistence type="inferred from homology"/>
<sequence length="348" mass="38352">MQSITIRRPDDWHLHLRDGAMLEGVIADTSRTFARAIIMPNLVPPVVTSADAKAYRERILKALPDSHRFQPLMTLYLTEHTSPDDVEEGKNSGLITAVKLYPAGATTNSHGGVRDMEKAMPVLERMAKIGLPLCVHGEVTTPEVDIFDREAVFIDTVLDPLRQRLPELKVTMEHVTTSDGVDYIKAARGNLAGSITTHHLIINRNAILVGGIRPHYYCLPVAKRENHRLALRAAAVSGDPRFFLGTDSAPHVDPLKECACGCAGIYTSVNTMSCLAHVFEQEGALERLEAFVSLNGPAWYGLQPNEERITLSRQAEPVVFPARIETGAGPVTVFDPMFPLHWQVVQQA</sequence>